<feature type="chain" id="PRO_0000321671" description="Octanoyltransferase">
    <location>
        <begin position="1"/>
        <end position="220"/>
    </location>
</feature>
<feature type="domain" description="BPL/LPL catalytic" evidence="2">
    <location>
        <begin position="31"/>
        <end position="211"/>
    </location>
</feature>
<feature type="active site" description="Acyl-thioester intermediate" evidence="1">
    <location>
        <position position="174"/>
    </location>
</feature>
<feature type="binding site" evidence="1">
    <location>
        <begin position="76"/>
        <end position="83"/>
    </location>
    <ligand>
        <name>substrate</name>
    </ligand>
</feature>
<feature type="binding site" evidence="1">
    <location>
        <begin position="143"/>
        <end position="145"/>
    </location>
    <ligand>
        <name>substrate</name>
    </ligand>
</feature>
<feature type="binding site" evidence="1">
    <location>
        <begin position="156"/>
        <end position="158"/>
    </location>
    <ligand>
        <name>substrate</name>
    </ligand>
</feature>
<feature type="site" description="Lowers pKa of active site Cys" evidence="1">
    <location>
        <position position="140"/>
    </location>
</feature>
<reference key="1">
    <citation type="journal article" date="2009" name="Appl. Environ. Microbiol.">
        <title>Three genomes from the phylum Acidobacteria provide insight into the lifestyles of these microorganisms in soils.</title>
        <authorList>
            <person name="Ward N.L."/>
            <person name="Challacombe J.F."/>
            <person name="Janssen P.H."/>
            <person name="Henrissat B."/>
            <person name="Coutinho P.M."/>
            <person name="Wu M."/>
            <person name="Xie G."/>
            <person name="Haft D.H."/>
            <person name="Sait M."/>
            <person name="Badger J."/>
            <person name="Barabote R.D."/>
            <person name="Bradley B."/>
            <person name="Brettin T.S."/>
            <person name="Brinkac L.M."/>
            <person name="Bruce D."/>
            <person name="Creasy T."/>
            <person name="Daugherty S.C."/>
            <person name="Davidsen T.M."/>
            <person name="DeBoy R.T."/>
            <person name="Detter J.C."/>
            <person name="Dodson R.J."/>
            <person name="Durkin A.S."/>
            <person name="Ganapathy A."/>
            <person name="Gwinn-Giglio M."/>
            <person name="Han C.S."/>
            <person name="Khouri H."/>
            <person name="Kiss H."/>
            <person name="Kothari S.P."/>
            <person name="Madupu R."/>
            <person name="Nelson K.E."/>
            <person name="Nelson W.C."/>
            <person name="Paulsen I."/>
            <person name="Penn K."/>
            <person name="Ren Q."/>
            <person name="Rosovitz M.J."/>
            <person name="Selengut J.D."/>
            <person name="Shrivastava S."/>
            <person name="Sullivan S.A."/>
            <person name="Tapia R."/>
            <person name="Thompson L.S."/>
            <person name="Watkins K.L."/>
            <person name="Yang Q."/>
            <person name="Yu C."/>
            <person name="Zafar N."/>
            <person name="Zhou L."/>
            <person name="Kuske C.R."/>
        </authorList>
    </citation>
    <scope>NUCLEOTIDE SEQUENCE [LARGE SCALE GENOMIC DNA]</scope>
    <source>
        <strain>Ellin6076</strain>
    </source>
</reference>
<name>LIPB_SOLUE</name>
<protein>
    <recommendedName>
        <fullName evidence="1">Octanoyltransferase</fullName>
        <ecNumber evidence="1">2.3.1.181</ecNumber>
    </recommendedName>
    <alternativeName>
        <fullName evidence="1">Lipoate-protein ligase B</fullName>
    </alternativeName>
    <alternativeName>
        <fullName evidence="1">Lipoyl/octanoyl transferase</fullName>
    </alternativeName>
    <alternativeName>
        <fullName evidence="1">Octanoyl-[acyl-carrier-protein]-protein N-octanoyltransferase</fullName>
    </alternativeName>
</protein>
<evidence type="ECO:0000255" key="1">
    <source>
        <dbReference type="HAMAP-Rule" id="MF_00013"/>
    </source>
</evidence>
<evidence type="ECO:0000255" key="2">
    <source>
        <dbReference type="PROSITE-ProRule" id="PRU01067"/>
    </source>
</evidence>
<organism>
    <name type="scientific">Solibacter usitatus (strain Ellin6076)</name>
    <dbReference type="NCBI Taxonomy" id="234267"/>
    <lineage>
        <taxon>Bacteria</taxon>
        <taxon>Pseudomonadati</taxon>
        <taxon>Acidobacteriota</taxon>
        <taxon>Terriglobia</taxon>
        <taxon>Bryobacterales</taxon>
        <taxon>Solibacteraceae</taxon>
        <taxon>Candidatus Solibacter</taxon>
    </lineage>
</organism>
<accession>Q02AK4</accession>
<dbReference type="EC" id="2.3.1.181" evidence="1"/>
<dbReference type="EMBL" id="CP000473">
    <property type="protein sequence ID" value="ABJ81912.1"/>
    <property type="molecule type" value="Genomic_DNA"/>
</dbReference>
<dbReference type="SMR" id="Q02AK4"/>
<dbReference type="FunCoup" id="Q02AK4">
    <property type="interactions" value="371"/>
</dbReference>
<dbReference type="STRING" id="234267.Acid_0913"/>
<dbReference type="KEGG" id="sus:Acid_0913"/>
<dbReference type="eggNOG" id="COG0321">
    <property type="taxonomic scope" value="Bacteria"/>
</dbReference>
<dbReference type="HOGENOM" id="CLU_035168_1_3_0"/>
<dbReference type="InParanoid" id="Q02AK4"/>
<dbReference type="OrthoDB" id="9787061at2"/>
<dbReference type="UniPathway" id="UPA00538">
    <property type="reaction ID" value="UER00592"/>
</dbReference>
<dbReference type="GO" id="GO:0005737">
    <property type="term" value="C:cytoplasm"/>
    <property type="evidence" value="ECO:0007669"/>
    <property type="project" value="UniProtKB-SubCell"/>
</dbReference>
<dbReference type="GO" id="GO:0033819">
    <property type="term" value="F:lipoyl(octanoyl) transferase activity"/>
    <property type="evidence" value="ECO:0007669"/>
    <property type="project" value="UniProtKB-EC"/>
</dbReference>
<dbReference type="GO" id="GO:0036211">
    <property type="term" value="P:protein modification process"/>
    <property type="evidence" value="ECO:0007669"/>
    <property type="project" value="InterPro"/>
</dbReference>
<dbReference type="CDD" id="cd16444">
    <property type="entry name" value="LipB"/>
    <property type="match status" value="1"/>
</dbReference>
<dbReference type="Gene3D" id="3.30.930.10">
    <property type="entry name" value="Bira Bifunctional Protein, Domain 2"/>
    <property type="match status" value="1"/>
</dbReference>
<dbReference type="HAMAP" id="MF_00013">
    <property type="entry name" value="LipB"/>
    <property type="match status" value="1"/>
</dbReference>
<dbReference type="InterPro" id="IPR045864">
    <property type="entry name" value="aa-tRNA-synth_II/BPL/LPL"/>
</dbReference>
<dbReference type="InterPro" id="IPR004143">
    <property type="entry name" value="BPL_LPL_catalytic"/>
</dbReference>
<dbReference type="InterPro" id="IPR000544">
    <property type="entry name" value="Octanoyltransferase"/>
</dbReference>
<dbReference type="InterPro" id="IPR020605">
    <property type="entry name" value="Octanoyltransferase_CS"/>
</dbReference>
<dbReference type="NCBIfam" id="TIGR00214">
    <property type="entry name" value="lipB"/>
    <property type="match status" value="1"/>
</dbReference>
<dbReference type="NCBIfam" id="NF010925">
    <property type="entry name" value="PRK14345.1"/>
    <property type="match status" value="1"/>
</dbReference>
<dbReference type="PANTHER" id="PTHR10993:SF7">
    <property type="entry name" value="LIPOYLTRANSFERASE 2, MITOCHONDRIAL-RELATED"/>
    <property type="match status" value="1"/>
</dbReference>
<dbReference type="PANTHER" id="PTHR10993">
    <property type="entry name" value="OCTANOYLTRANSFERASE"/>
    <property type="match status" value="1"/>
</dbReference>
<dbReference type="Pfam" id="PF21948">
    <property type="entry name" value="LplA-B_cat"/>
    <property type="match status" value="1"/>
</dbReference>
<dbReference type="PIRSF" id="PIRSF016262">
    <property type="entry name" value="LPLase"/>
    <property type="match status" value="1"/>
</dbReference>
<dbReference type="SUPFAM" id="SSF55681">
    <property type="entry name" value="Class II aaRS and biotin synthetases"/>
    <property type="match status" value="1"/>
</dbReference>
<dbReference type="PROSITE" id="PS51733">
    <property type="entry name" value="BPL_LPL_CATALYTIC"/>
    <property type="match status" value="1"/>
</dbReference>
<dbReference type="PROSITE" id="PS01313">
    <property type="entry name" value="LIPB"/>
    <property type="match status" value="1"/>
</dbReference>
<proteinExistence type="inferred from homology"/>
<comment type="function">
    <text evidence="1">Catalyzes the transfer of endogenously produced octanoic acid from octanoyl-acyl-carrier-protein onto the lipoyl domains of lipoate-dependent enzymes. Lipoyl-ACP can also act as a substrate although octanoyl-ACP is likely to be the physiological substrate.</text>
</comment>
<comment type="catalytic activity">
    <reaction evidence="1">
        <text>octanoyl-[ACP] + L-lysyl-[protein] = N(6)-octanoyl-L-lysyl-[protein] + holo-[ACP] + H(+)</text>
        <dbReference type="Rhea" id="RHEA:17665"/>
        <dbReference type="Rhea" id="RHEA-COMP:9636"/>
        <dbReference type="Rhea" id="RHEA-COMP:9685"/>
        <dbReference type="Rhea" id="RHEA-COMP:9752"/>
        <dbReference type="Rhea" id="RHEA-COMP:9928"/>
        <dbReference type="ChEBI" id="CHEBI:15378"/>
        <dbReference type="ChEBI" id="CHEBI:29969"/>
        <dbReference type="ChEBI" id="CHEBI:64479"/>
        <dbReference type="ChEBI" id="CHEBI:78463"/>
        <dbReference type="ChEBI" id="CHEBI:78809"/>
        <dbReference type="EC" id="2.3.1.181"/>
    </reaction>
</comment>
<comment type="pathway">
    <text evidence="1">Protein modification; protein lipoylation via endogenous pathway; protein N(6)-(lipoyl)lysine from octanoyl-[acyl-carrier-protein]: step 1/2.</text>
</comment>
<comment type="subcellular location">
    <subcellularLocation>
        <location evidence="1">Cytoplasm</location>
    </subcellularLocation>
</comment>
<comment type="miscellaneous">
    <text evidence="1">In the reaction, the free carboxyl group of octanoic acid is attached via an amide linkage to the epsilon-amino group of a specific lysine residue of lipoyl domains of lipoate-dependent enzymes.</text>
</comment>
<comment type="similarity">
    <text evidence="1">Belongs to the LipB family.</text>
</comment>
<gene>
    <name evidence="1" type="primary">lipB</name>
    <name type="ordered locus">Acid_0913</name>
</gene>
<sequence length="220" mass="24095">MRNCCLRQLGRIDYASALEIQEQLAASRKQGTAADHLLLLEHPHVITLGRNGHLENLLAGDDILERAGIAFFPTNRGGDVTYHGPGQLVGYPILDLRDWKRDVGAYVRALEQAIIDTLGDYGIEAGRIPKLTGVWVGERKIAAIGVHLSRWVTSHGFALNVSTDLSYFQYIVPCGLTKPVTSMAALGVRASLDEVGERFTRHFARIFDFEMLPGASLAAA</sequence>
<keyword id="KW-0012">Acyltransferase</keyword>
<keyword id="KW-0963">Cytoplasm</keyword>
<keyword id="KW-0808">Transferase</keyword>